<reference key="1">
    <citation type="submission" date="2007-03" db="EMBL/GenBank/DDBJ databases">
        <title>Complete sequence of Shewanella loihica PV-4.</title>
        <authorList>
            <consortium name="US DOE Joint Genome Institute"/>
            <person name="Copeland A."/>
            <person name="Lucas S."/>
            <person name="Lapidus A."/>
            <person name="Barry K."/>
            <person name="Detter J.C."/>
            <person name="Glavina del Rio T."/>
            <person name="Hammon N."/>
            <person name="Israni S."/>
            <person name="Dalin E."/>
            <person name="Tice H."/>
            <person name="Pitluck S."/>
            <person name="Chain P."/>
            <person name="Malfatti S."/>
            <person name="Shin M."/>
            <person name="Vergez L."/>
            <person name="Schmutz J."/>
            <person name="Larimer F."/>
            <person name="Land M."/>
            <person name="Hauser L."/>
            <person name="Kyrpides N."/>
            <person name="Mikhailova N."/>
            <person name="Romine M.F."/>
            <person name="Serres G."/>
            <person name="Fredrickson J."/>
            <person name="Tiedje J."/>
            <person name="Richardson P."/>
        </authorList>
    </citation>
    <scope>NUCLEOTIDE SEQUENCE [LARGE SCALE GENOMIC DNA]</scope>
    <source>
        <strain>ATCC BAA-1088 / PV-4</strain>
    </source>
</reference>
<name>HIS1_SHELP</name>
<gene>
    <name evidence="1" type="primary">hisG</name>
    <name type="ordered locus">Shew_2197</name>
</gene>
<protein>
    <recommendedName>
        <fullName evidence="1">ATP phosphoribosyltransferase</fullName>
        <shortName evidence="1">ATP-PRT</shortName>
        <shortName evidence="1">ATP-PRTase</shortName>
        <ecNumber evidence="1">2.4.2.17</ecNumber>
    </recommendedName>
</protein>
<keyword id="KW-0028">Amino-acid biosynthesis</keyword>
<keyword id="KW-0067">ATP-binding</keyword>
<keyword id="KW-0963">Cytoplasm</keyword>
<keyword id="KW-0328">Glycosyltransferase</keyword>
<keyword id="KW-0368">Histidine biosynthesis</keyword>
<keyword id="KW-0460">Magnesium</keyword>
<keyword id="KW-0479">Metal-binding</keyword>
<keyword id="KW-0547">Nucleotide-binding</keyword>
<keyword id="KW-1185">Reference proteome</keyword>
<keyword id="KW-0808">Transferase</keyword>
<sequence>MSESNRLRIAIQKSGRLSKESQKLLKSCGIKFNVNEQRLIAHSDNMPIDLLRVRDDDIPGLVMDGVVDLGIIGENVLEEEQIERQTLDKPSECIKLRQLDFGACRLSLAVPTEFRYQDASSLEGLRIATSYPNLLRRYMQEKGISYRDCMLKGSVEVAPRAGLADGICDLVSTGATLEANGLYETEVIYRSMACIIQSTQEQSEAKQALIDKILSRVNGVVRAKESKYILLHAPTETLDQIVALLPGAENPTVLPLNDDTNRVAIHAVSSEDLFWDTMEALTQLGASSILVMPIEKMMG</sequence>
<comment type="function">
    <text evidence="1">Catalyzes the condensation of ATP and 5-phosphoribose 1-diphosphate to form N'-(5'-phosphoribosyl)-ATP (PR-ATP). Has a crucial role in the pathway because the rate of histidine biosynthesis seems to be controlled primarily by regulation of HisG enzymatic activity.</text>
</comment>
<comment type="catalytic activity">
    <reaction evidence="1">
        <text>1-(5-phospho-beta-D-ribosyl)-ATP + diphosphate = 5-phospho-alpha-D-ribose 1-diphosphate + ATP</text>
        <dbReference type="Rhea" id="RHEA:18473"/>
        <dbReference type="ChEBI" id="CHEBI:30616"/>
        <dbReference type="ChEBI" id="CHEBI:33019"/>
        <dbReference type="ChEBI" id="CHEBI:58017"/>
        <dbReference type="ChEBI" id="CHEBI:73183"/>
        <dbReference type="EC" id="2.4.2.17"/>
    </reaction>
</comment>
<comment type="cofactor">
    <cofactor evidence="1">
        <name>Mg(2+)</name>
        <dbReference type="ChEBI" id="CHEBI:18420"/>
    </cofactor>
</comment>
<comment type="activity regulation">
    <text evidence="1">Feedback inhibited by histidine.</text>
</comment>
<comment type="pathway">
    <text evidence="1">Amino-acid biosynthesis; L-histidine biosynthesis; L-histidine from 5-phospho-alpha-D-ribose 1-diphosphate: step 1/9.</text>
</comment>
<comment type="subcellular location">
    <subcellularLocation>
        <location evidence="1">Cytoplasm</location>
    </subcellularLocation>
</comment>
<comment type="similarity">
    <text evidence="1">Belongs to the ATP phosphoribosyltransferase family. Long subfamily.</text>
</comment>
<organism>
    <name type="scientific">Shewanella loihica (strain ATCC BAA-1088 / PV-4)</name>
    <dbReference type="NCBI Taxonomy" id="323850"/>
    <lineage>
        <taxon>Bacteria</taxon>
        <taxon>Pseudomonadati</taxon>
        <taxon>Pseudomonadota</taxon>
        <taxon>Gammaproteobacteria</taxon>
        <taxon>Alteromonadales</taxon>
        <taxon>Shewanellaceae</taxon>
        <taxon>Shewanella</taxon>
    </lineage>
</organism>
<accession>A3QF15</accession>
<evidence type="ECO:0000255" key="1">
    <source>
        <dbReference type="HAMAP-Rule" id="MF_00079"/>
    </source>
</evidence>
<proteinExistence type="inferred from homology"/>
<feature type="chain" id="PRO_1000004503" description="ATP phosphoribosyltransferase">
    <location>
        <begin position="1"/>
        <end position="299"/>
    </location>
</feature>
<dbReference type="EC" id="2.4.2.17" evidence="1"/>
<dbReference type="EMBL" id="CP000606">
    <property type="protein sequence ID" value="ABO24063.1"/>
    <property type="molecule type" value="Genomic_DNA"/>
</dbReference>
<dbReference type="RefSeq" id="WP_011865995.1">
    <property type="nucleotide sequence ID" value="NC_009092.1"/>
</dbReference>
<dbReference type="SMR" id="A3QF15"/>
<dbReference type="STRING" id="323850.Shew_2197"/>
<dbReference type="KEGG" id="slo:Shew_2197"/>
<dbReference type="eggNOG" id="COG0040">
    <property type="taxonomic scope" value="Bacteria"/>
</dbReference>
<dbReference type="HOGENOM" id="CLU_038115_1_0_6"/>
<dbReference type="OrthoDB" id="9801867at2"/>
<dbReference type="UniPathway" id="UPA00031">
    <property type="reaction ID" value="UER00006"/>
</dbReference>
<dbReference type="Proteomes" id="UP000001558">
    <property type="component" value="Chromosome"/>
</dbReference>
<dbReference type="GO" id="GO:0005737">
    <property type="term" value="C:cytoplasm"/>
    <property type="evidence" value="ECO:0007669"/>
    <property type="project" value="UniProtKB-SubCell"/>
</dbReference>
<dbReference type="GO" id="GO:0005524">
    <property type="term" value="F:ATP binding"/>
    <property type="evidence" value="ECO:0007669"/>
    <property type="project" value="UniProtKB-KW"/>
</dbReference>
<dbReference type="GO" id="GO:0003879">
    <property type="term" value="F:ATP phosphoribosyltransferase activity"/>
    <property type="evidence" value="ECO:0007669"/>
    <property type="project" value="UniProtKB-UniRule"/>
</dbReference>
<dbReference type="GO" id="GO:0000287">
    <property type="term" value="F:magnesium ion binding"/>
    <property type="evidence" value="ECO:0007669"/>
    <property type="project" value="UniProtKB-UniRule"/>
</dbReference>
<dbReference type="GO" id="GO:0000105">
    <property type="term" value="P:L-histidine biosynthetic process"/>
    <property type="evidence" value="ECO:0007669"/>
    <property type="project" value="UniProtKB-UniRule"/>
</dbReference>
<dbReference type="CDD" id="cd13592">
    <property type="entry name" value="PBP2_HisGL2"/>
    <property type="match status" value="1"/>
</dbReference>
<dbReference type="FunFam" id="3.30.70.120:FF:000002">
    <property type="entry name" value="ATP phosphoribosyltransferase"/>
    <property type="match status" value="1"/>
</dbReference>
<dbReference type="FunFam" id="3.40.190.10:FF:000008">
    <property type="entry name" value="ATP phosphoribosyltransferase"/>
    <property type="match status" value="1"/>
</dbReference>
<dbReference type="Gene3D" id="3.30.70.120">
    <property type="match status" value="1"/>
</dbReference>
<dbReference type="Gene3D" id="3.40.190.10">
    <property type="entry name" value="Periplasmic binding protein-like II"/>
    <property type="match status" value="2"/>
</dbReference>
<dbReference type="HAMAP" id="MF_00079">
    <property type="entry name" value="HisG_Long"/>
    <property type="match status" value="1"/>
</dbReference>
<dbReference type="InterPro" id="IPR020621">
    <property type="entry name" value="ATP-PRT_HisG_long"/>
</dbReference>
<dbReference type="InterPro" id="IPR013820">
    <property type="entry name" value="ATP_PRibTrfase_cat"/>
</dbReference>
<dbReference type="InterPro" id="IPR018198">
    <property type="entry name" value="ATP_PRibTrfase_CS"/>
</dbReference>
<dbReference type="InterPro" id="IPR001348">
    <property type="entry name" value="ATP_PRibTrfase_HisG"/>
</dbReference>
<dbReference type="InterPro" id="IPR013115">
    <property type="entry name" value="HisG_C"/>
</dbReference>
<dbReference type="InterPro" id="IPR011322">
    <property type="entry name" value="N-reg_PII-like_a/b"/>
</dbReference>
<dbReference type="InterPro" id="IPR015867">
    <property type="entry name" value="N-reg_PII/ATP_PRibTrfase_C"/>
</dbReference>
<dbReference type="NCBIfam" id="TIGR00070">
    <property type="entry name" value="hisG"/>
    <property type="match status" value="1"/>
</dbReference>
<dbReference type="NCBIfam" id="TIGR03455">
    <property type="entry name" value="HisG_C-term"/>
    <property type="match status" value="1"/>
</dbReference>
<dbReference type="PANTHER" id="PTHR21403:SF8">
    <property type="entry name" value="ATP PHOSPHORIBOSYLTRANSFERASE"/>
    <property type="match status" value="1"/>
</dbReference>
<dbReference type="PANTHER" id="PTHR21403">
    <property type="entry name" value="ATP PHOSPHORIBOSYLTRANSFERASE ATP-PRTASE"/>
    <property type="match status" value="1"/>
</dbReference>
<dbReference type="Pfam" id="PF01634">
    <property type="entry name" value="HisG"/>
    <property type="match status" value="1"/>
</dbReference>
<dbReference type="Pfam" id="PF08029">
    <property type="entry name" value="HisG_C"/>
    <property type="match status" value="1"/>
</dbReference>
<dbReference type="SUPFAM" id="SSF54913">
    <property type="entry name" value="GlnB-like"/>
    <property type="match status" value="1"/>
</dbReference>
<dbReference type="SUPFAM" id="SSF53850">
    <property type="entry name" value="Periplasmic binding protein-like II"/>
    <property type="match status" value="1"/>
</dbReference>
<dbReference type="PROSITE" id="PS01316">
    <property type="entry name" value="ATP_P_PHORIBOSYLTR"/>
    <property type="match status" value="1"/>
</dbReference>